<name>BTUD_SALPA</name>
<organism>
    <name type="scientific">Salmonella paratyphi A (strain ATCC 9150 / SARB42)</name>
    <dbReference type="NCBI Taxonomy" id="295319"/>
    <lineage>
        <taxon>Bacteria</taxon>
        <taxon>Pseudomonadati</taxon>
        <taxon>Pseudomonadota</taxon>
        <taxon>Gammaproteobacteria</taxon>
        <taxon>Enterobacterales</taxon>
        <taxon>Enterobacteriaceae</taxon>
        <taxon>Salmonella</taxon>
    </lineage>
</organism>
<feature type="chain" id="PRO_0000091957" description="Vitamin B12 import ATP-binding protein BtuD">
    <location>
        <begin position="1"/>
        <end position="249"/>
    </location>
</feature>
<feature type="domain" description="ABC transporter" evidence="1">
    <location>
        <begin position="1"/>
        <end position="233"/>
    </location>
</feature>
<feature type="binding site" evidence="1">
    <location>
        <begin position="33"/>
        <end position="40"/>
    </location>
    <ligand>
        <name>ATP</name>
        <dbReference type="ChEBI" id="CHEBI:30616"/>
    </ligand>
</feature>
<accession>Q5PH81</accession>
<reference key="1">
    <citation type="journal article" date="2004" name="Nat. Genet.">
        <title>Comparison of genome degradation in Paratyphi A and Typhi, human-restricted serovars of Salmonella enterica that cause typhoid.</title>
        <authorList>
            <person name="McClelland M."/>
            <person name="Sanderson K.E."/>
            <person name="Clifton S.W."/>
            <person name="Latreille P."/>
            <person name="Porwollik S."/>
            <person name="Sabo A."/>
            <person name="Meyer R."/>
            <person name="Bieri T."/>
            <person name="Ozersky P."/>
            <person name="McLellan M."/>
            <person name="Harkins C.R."/>
            <person name="Wang C."/>
            <person name="Nguyen C."/>
            <person name="Berghoff A."/>
            <person name="Elliott G."/>
            <person name="Kohlberg S."/>
            <person name="Strong C."/>
            <person name="Du F."/>
            <person name="Carter J."/>
            <person name="Kremizki C."/>
            <person name="Layman D."/>
            <person name="Leonard S."/>
            <person name="Sun H."/>
            <person name="Fulton L."/>
            <person name="Nash W."/>
            <person name="Miner T."/>
            <person name="Minx P."/>
            <person name="Delehaunty K."/>
            <person name="Fronick C."/>
            <person name="Magrini V."/>
            <person name="Nhan M."/>
            <person name="Warren W."/>
            <person name="Florea L."/>
            <person name="Spieth J."/>
            <person name="Wilson R.K."/>
        </authorList>
    </citation>
    <scope>NUCLEOTIDE SEQUENCE [LARGE SCALE GENOMIC DNA]</scope>
    <source>
        <strain>ATCC 9150 / SARB42</strain>
    </source>
</reference>
<comment type="function">
    <text evidence="1">Part of the ABC transporter complex BtuCDF involved in vitamin B12 import. Responsible for energy coupling to the transport system.</text>
</comment>
<comment type="catalytic activity">
    <reaction evidence="1">
        <text>an R-cob(III)alamin(out) + ATP + H2O = an R-cob(III)alamin(in) + ADP + phosphate + H(+)</text>
        <dbReference type="Rhea" id="RHEA:17873"/>
        <dbReference type="ChEBI" id="CHEBI:15377"/>
        <dbReference type="ChEBI" id="CHEBI:15378"/>
        <dbReference type="ChEBI" id="CHEBI:30616"/>
        <dbReference type="ChEBI" id="CHEBI:43474"/>
        <dbReference type="ChEBI" id="CHEBI:140785"/>
        <dbReference type="ChEBI" id="CHEBI:456216"/>
        <dbReference type="EC" id="7.6.2.8"/>
    </reaction>
</comment>
<comment type="subunit">
    <text evidence="1">The complex is composed of two ATP-binding proteins (BtuD), two transmembrane proteins (BtuC) and a solute-binding protein (BtuF).</text>
</comment>
<comment type="subcellular location">
    <subcellularLocation>
        <location evidence="1">Cell inner membrane</location>
        <topology evidence="1">Peripheral membrane protein</topology>
    </subcellularLocation>
</comment>
<comment type="similarity">
    <text evidence="1">Belongs to the ABC transporter superfamily. Vitamin B12 importer (TC 3.A.1.13.1) family.</text>
</comment>
<proteinExistence type="inferred from homology"/>
<gene>
    <name evidence="1" type="primary">btuD</name>
    <name type="ordered locus">SPA1501</name>
</gene>
<protein>
    <recommendedName>
        <fullName evidence="1">Vitamin B12 import ATP-binding protein BtuD</fullName>
        <ecNumber evidence="1">7.6.2.8</ecNumber>
    </recommendedName>
    <alternativeName>
        <fullName evidence="1">Vitamin B12-transporting ATPase</fullName>
    </alternativeName>
</protein>
<keyword id="KW-0067">ATP-binding</keyword>
<keyword id="KW-0997">Cell inner membrane</keyword>
<keyword id="KW-1003">Cell membrane</keyword>
<keyword id="KW-0472">Membrane</keyword>
<keyword id="KW-0547">Nucleotide-binding</keyword>
<keyword id="KW-1278">Translocase</keyword>
<keyword id="KW-0813">Transport</keyword>
<dbReference type="EC" id="7.6.2.8" evidence="1"/>
<dbReference type="EMBL" id="CP000026">
    <property type="protein sequence ID" value="AAV77434.1"/>
    <property type="molecule type" value="Genomic_DNA"/>
</dbReference>
<dbReference type="RefSeq" id="WP_000080606.1">
    <property type="nucleotide sequence ID" value="NC_006511.1"/>
</dbReference>
<dbReference type="SMR" id="Q5PH81"/>
<dbReference type="KEGG" id="spt:SPA1501"/>
<dbReference type="HOGENOM" id="CLU_000604_1_11_6"/>
<dbReference type="Proteomes" id="UP000008185">
    <property type="component" value="Chromosome"/>
</dbReference>
<dbReference type="GO" id="GO:0005886">
    <property type="term" value="C:plasma membrane"/>
    <property type="evidence" value="ECO:0007669"/>
    <property type="project" value="UniProtKB-SubCell"/>
</dbReference>
<dbReference type="GO" id="GO:0015420">
    <property type="term" value="F:ABC-type vitamin B12 transporter activity"/>
    <property type="evidence" value="ECO:0007669"/>
    <property type="project" value="UniProtKB-UniRule"/>
</dbReference>
<dbReference type="GO" id="GO:0005524">
    <property type="term" value="F:ATP binding"/>
    <property type="evidence" value="ECO:0007669"/>
    <property type="project" value="UniProtKB-KW"/>
</dbReference>
<dbReference type="GO" id="GO:0016887">
    <property type="term" value="F:ATP hydrolysis activity"/>
    <property type="evidence" value="ECO:0007669"/>
    <property type="project" value="InterPro"/>
</dbReference>
<dbReference type="CDD" id="cd03214">
    <property type="entry name" value="ABC_Iron-Siderophores_B12_Hemin"/>
    <property type="match status" value="1"/>
</dbReference>
<dbReference type="FunFam" id="3.40.50.300:FF:000462">
    <property type="entry name" value="Vitamin B12 import ATP-binding protein BtuD"/>
    <property type="match status" value="1"/>
</dbReference>
<dbReference type="Gene3D" id="3.40.50.300">
    <property type="entry name" value="P-loop containing nucleotide triphosphate hydrolases"/>
    <property type="match status" value="1"/>
</dbReference>
<dbReference type="HAMAP" id="MF_01005">
    <property type="entry name" value="BtuD"/>
    <property type="match status" value="1"/>
</dbReference>
<dbReference type="InterPro" id="IPR003593">
    <property type="entry name" value="AAA+_ATPase"/>
</dbReference>
<dbReference type="InterPro" id="IPR003439">
    <property type="entry name" value="ABC_transporter-like_ATP-bd"/>
</dbReference>
<dbReference type="InterPro" id="IPR017871">
    <property type="entry name" value="ABC_transporter-like_CS"/>
</dbReference>
<dbReference type="InterPro" id="IPR023693">
    <property type="entry name" value="ABC_transptr_BtuD"/>
</dbReference>
<dbReference type="InterPro" id="IPR050153">
    <property type="entry name" value="Metal_Ion_Import_ABC"/>
</dbReference>
<dbReference type="InterPro" id="IPR027417">
    <property type="entry name" value="P-loop_NTPase"/>
</dbReference>
<dbReference type="NCBIfam" id="NF002981">
    <property type="entry name" value="PRK03695.1"/>
    <property type="match status" value="1"/>
</dbReference>
<dbReference type="PANTHER" id="PTHR42734">
    <property type="entry name" value="METAL TRANSPORT SYSTEM ATP-BINDING PROTEIN TM_0124-RELATED"/>
    <property type="match status" value="1"/>
</dbReference>
<dbReference type="PANTHER" id="PTHR42734:SF18">
    <property type="entry name" value="VITAMIN B12 IMPORT ATP-BINDING PROTEIN BTUD"/>
    <property type="match status" value="1"/>
</dbReference>
<dbReference type="Pfam" id="PF00005">
    <property type="entry name" value="ABC_tran"/>
    <property type="match status" value="1"/>
</dbReference>
<dbReference type="SMART" id="SM00382">
    <property type="entry name" value="AAA"/>
    <property type="match status" value="1"/>
</dbReference>
<dbReference type="SUPFAM" id="SSF52540">
    <property type="entry name" value="P-loop containing nucleoside triphosphate hydrolases"/>
    <property type="match status" value="1"/>
</dbReference>
<dbReference type="PROSITE" id="PS00211">
    <property type="entry name" value="ABC_TRANSPORTER_1"/>
    <property type="match status" value="1"/>
</dbReference>
<dbReference type="PROSITE" id="PS50893">
    <property type="entry name" value="ABC_TRANSPORTER_2"/>
    <property type="match status" value="1"/>
</dbReference>
<sequence>MSQLMQLKDVAESTRLGPLSGEVSAGEILHLVGPNGAGKSTLLARMAGLTSGEGSIRFGGAPLEAWATATLAQHRAYLAQQQNPPFAMPVWHYLTLHQPDKTRTGQLNEVADMLGLGDKLGRSVNQLSGGEWQRVRLAAVVLQIHPDANPVGQLLLLDEPMNSLDVAQQNALDRVLHHLCQAGIAIVMSSHDLNHTLRHAHKAWLLKRGKLIACGRREEVFTPSYLAQAYGLRFRRLDVEGHPMLISAT</sequence>
<evidence type="ECO:0000255" key="1">
    <source>
        <dbReference type="HAMAP-Rule" id="MF_01005"/>
    </source>
</evidence>